<organism>
    <name type="scientific">Methylobacillus flagellatus (strain ATCC 51484 / DSM 6875 / VKM B-1610 / KT)</name>
    <dbReference type="NCBI Taxonomy" id="265072"/>
    <lineage>
        <taxon>Bacteria</taxon>
        <taxon>Pseudomonadati</taxon>
        <taxon>Pseudomonadota</taxon>
        <taxon>Betaproteobacteria</taxon>
        <taxon>Nitrosomonadales</taxon>
        <taxon>Methylophilaceae</taxon>
        <taxon>Methylobacillus</taxon>
    </lineage>
</organism>
<name>MTGA_METFK</name>
<accession>Q1GYH8</accession>
<proteinExistence type="inferred from homology"/>
<keyword id="KW-0997">Cell inner membrane</keyword>
<keyword id="KW-1003">Cell membrane</keyword>
<keyword id="KW-0133">Cell shape</keyword>
<keyword id="KW-0961">Cell wall biogenesis/degradation</keyword>
<keyword id="KW-0328">Glycosyltransferase</keyword>
<keyword id="KW-0472">Membrane</keyword>
<keyword id="KW-0573">Peptidoglycan synthesis</keyword>
<keyword id="KW-1185">Reference proteome</keyword>
<keyword id="KW-0808">Transferase</keyword>
<keyword id="KW-0812">Transmembrane</keyword>
<keyword id="KW-1133">Transmembrane helix</keyword>
<feature type="chain" id="PRO_0000257674" description="Biosynthetic peptidoglycan transglycosylase">
    <location>
        <begin position="1"/>
        <end position="229"/>
    </location>
</feature>
<feature type="transmembrane region" description="Helical" evidence="1">
    <location>
        <begin position="10"/>
        <end position="30"/>
    </location>
</feature>
<gene>
    <name evidence="1" type="primary">mtgA</name>
    <name type="ordered locus">Mfla_2444</name>
</gene>
<dbReference type="EC" id="2.4.99.28" evidence="1"/>
<dbReference type="EMBL" id="CP000284">
    <property type="protein sequence ID" value="ABE50709.1"/>
    <property type="molecule type" value="Genomic_DNA"/>
</dbReference>
<dbReference type="RefSeq" id="WP_011480662.1">
    <property type="nucleotide sequence ID" value="NC_007947.1"/>
</dbReference>
<dbReference type="SMR" id="Q1GYH8"/>
<dbReference type="STRING" id="265072.Mfla_2444"/>
<dbReference type="CAZy" id="GT51">
    <property type="family name" value="Glycosyltransferase Family 51"/>
</dbReference>
<dbReference type="KEGG" id="mfa:Mfla_2444"/>
<dbReference type="eggNOG" id="COG0744">
    <property type="taxonomic scope" value="Bacteria"/>
</dbReference>
<dbReference type="HOGENOM" id="CLU_006354_1_0_4"/>
<dbReference type="OrthoDB" id="9766909at2"/>
<dbReference type="UniPathway" id="UPA00219"/>
<dbReference type="Proteomes" id="UP000002440">
    <property type="component" value="Chromosome"/>
</dbReference>
<dbReference type="GO" id="GO:0009274">
    <property type="term" value="C:peptidoglycan-based cell wall"/>
    <property type="evidence" value="ECO:0007669"/>
    <property type="project" value="InterPro"/>
</dbReference>
<dbReference type="GO" id="GO:0005886">
    <property type="term" value="C:plasma membrane"/>
    <property type="evidence" value="ECO:0007669"/>
    <property type="project" value="UniProtKB-SubCell"/>
</dbReference>
<dbReference type="GO" id="GO:0016763">
    <property type="term" value="F:pentosyltransferase activity"/>
    <property type="evidence" value="ECO:0007669"/>
    <property type="project" value="InterPro"/>
</dbReference>
<dbReference type="GO" id="GO:0008955">
    <property type="term" value="F:peptidoglycan glycosyltransferase activity"/>
    <property type="evidence" value="ECO:0007669"/>
    <property type="project" value="UniProtKB-UniRule"/>
</dbReference>
<dbReference type="GO" id="GO:0071555">
    <property type="term" value="P:cell wall organization"/>
    <property type="evidence" value="ECO:0007669"/>
    <property type="project" value="UniProtKB-KW"/>
</dbReference>
<dbReference type="GO" id="GO:0009252">
    <property type="term" value="P:peptidoglycan biosynthetic process"/>
    <property type="evidence" value="ECO:0007669"/>
    <property type="project" value="UniProtKB-UniRule"/>
</dbReference>
<dbReference type="GO" id="GO:0008360">
    <property type="term" value="P:regulation of cell shape"/>
    <property type="evidence" value="ECO:0007669"/>
    <property type="project" value="UniProtKB-KW"/>
</dbReference>
<dbReference type="Gene3D" id="1.10.3810.10">
    <property type="entry name" value="Biosynthetic peptidoglycan transglycosylase-like"/>
    <property type="match status" value="1"/>
</dbReference>
<dbReference type="HAMAP" id="MF_00766">
    <property type="entry name" value="PGT_MtgA"/>
    <property type="match status" value="1"/>
</dbReference>
<dbReference type="InterPro" id="IPR001264">
    <property type="entry name" value="Glyco_trans_51"/>
</dbReference>
<dbReference type="InterPro" id="IPR023346">
    <property type="entry name" value="Lysozyme-like_dom_sf"/>
</dbReference>
<dbReference type="InterPro" id="IPR036950">
    <property type="entry name" value="PBP_transglycosylase"/>
</dbReference>
<dbReference type="InterPro" id="IPR011812">
    <property type="entry name" value="Pep_trsgly"/>
</dbReference>
<dbReference type="NCBIfam" id="TIGR02070">
    <property type="entry name" value="mono_pep_trsgly"/>
    <property type="match status" value="1"/>
</dbReference>
<dbReference type="PANTHER" id="PTHR30400:SF0">
    <property type="entry name" value="BIOSYNTHETIC PEPTIDOGLYCAN TRANSGLYCOSYLASE"/>
    <property type="match status" value="1"/>
</dbReference>
<dbReference type="PANTHER" id="PTHR30400">
    <property type="entry name" value="MONOFUNCTIONAL BIOSYNTHETIC PEPTIDOGLYCAN TRANSGLYCOSYLASE"/>
    <property type="match status" value="1"/>
</dbReference>
<dbReference type="Pfam" id="PF00912">
    <property type="entry name" value="Transgly"/>
    <property type="match status" value="1"/>
</dbReference>
<dbReference type="SUPFAM" id="SSF53955">
    <property type="entry name" value="Lysozyme-like"/>
    <property type="match status" value="1"/>
</dbReference>
<reference key="1">
    <citation type="submission" date="2006-03" db="EMBL/GenBank/DDBJ databases">
        <title>Complete sequence of Methylobacillus flagellatus KT.</title>
        <authorList>
            <consortium name="US DOE Joint Genome Institute"/>
            <person name="Copeland A."/>
            <person name="Lucas S."/>
            <person name="Lapidus A."/>
            <person name="Barry K."/>
            <person name="Detter J.C."/>
            <person name="Glavina del Rio T."/>
            <person name="Hammon N."/>
            <person name="Israni S."/>
            <person name="Dalin E."/>
            <person name="Tice H."/>
            <person name="Pitluck S."/>
            <person name="Brettin T."/>
            <person name="Bruce D."/>
            <person name="Han C."/>
            <person name="Tapia R."/>
            <person name="Saunders E."/>
            <person name="Gilna P."/>
            <person name="Schmutz J."/>
            <person name="Larimer F."/>
            <person name="Land M."/>
            <person name="Kyrpides N."/>
            <person name="Anderson I."/>
            <person name="Richardson P."/>
        </authorList>
    </citation>
    <scope>NUCLEOTIDE SEQUENCE [LARGE SCALE GENOMIC DNA]</scope>
    <source>
        <strain>ATCC 51484 / DSM 6875 / VKM B-1610 / KT</strain>
    </source>
</reference>
<protein>
    <recommendedName>
        <fullName evidence="1">Biosynthetic peptidoglycan transglycosylase</fullName>
        <ecNumber evidence="1">2.4.99.28</ecNumber>
    </recommendedName>
    <alternativeName>
        <fullName evidence="1">Glycan polymerase</fullName>
    </alternativeName>
    <alternativeName>
        <fullName evidence="1">Peptidoglycan glycosyltransferase MtgA</fullName>
        <shortName evidence="1">PGT</shortName>
    </alternativeName>
</protein>
<comment type="function">
    <text evidence="1">Peptidoglycan polymerase that catalyzes glycan chain elongation from lipid-linked precursors.</text>
</comment>
<comment type="catalytic activity">
    <reaction evidence="1">
        <text>[GlcNAc-(1-&gt;4)-Mur2Ac(oyl-L-Ala-gamma-D-Glu-L-Lys-D-Ala-D-Ala)](n)-di-trans,octa-cis-undecaprenyl diphosphate + beta-D-GlcNAc-(1-&gt;4)-Mur2Ac(oyl-L-Ala-gamma-D-Glu-L-Lys-D-Ala-D-Ala)-di-trans,octa-cis-undecaprenyl diphosphate = [GlcNAc-(1-&gt;4)-Mur2Ac(oyl-L-Ala-gamma-D-Glu-L-Lys-D-Ala-D-Ala)](n+1)-di-trans,octa-cis-undecaprenyl diphosphate + di-trans,octa-cis-undecaprenyl diphosphate + H(+)</text>
        <dbReference type="Rhea" id="RHEA:23708"/>
        <dbReference type="Rhea" id="RHEA-COMP:9602"/>
        <dbReference type="Rhea" id="RHEA-COMP:9603"/>
        <dbReference type="ChEBI" id="CHEBI:15378"/>
        <dbReference type="ChEBI" id="CHEBI:58405"/>
        <dbReference type="ChEBI" id="CHEBI:60033"/>
        <dbReference type="ChEBI" id="CHEBI:78435"/>
        <dbReference type="EC" id="2.4.99.28"/>
    </reaction>
</comment>
<comment type="pathway">
    <text evidence="1">Cell wall biogenesis; peptidoglycan biosynthesis.</text>
</comment>
<comment type="subcellular location">
    <subcellularLocation>
        <location evidence="1">Cell inner membrane</location>
        <topology evidence="1">Single-pass membrane protein</topology>
    </subcellularLocation>
</comment>
<comment type="similarity">
    <text evidence="1">Belongs to the glycosyltransferase 51 family.</text>
</comment>
<evidence type="ECO:0000255" key="1">
    <source>
        <dbReference type="HAMAP-Rule" id="MF_00766"/>
    </source>
</evidence>
<sequence length="229" mass="26692">MIKQLFWRGLLLALVLVVLYQFWIFMHILWWVEHNPSSSAFMRASLSALQQDNPDAALKHQWVEYQRISIHLKRAVIAAEDAKFVGHEGFDWDGIQKAYEKNWKQGKIVAGGSTISQQLAKNLFLSTKRTPWRKLEEAVITWMLERMMSKRRIFEIYLNVIEWGNGVFGAEAAARHYYRTSASSLNVAQAARLAAMIPNPRYYDKHREARGLIRKARIIEARMRYAEVP</sequence>